<feature type="chain" id="PRO_0000349236" description="Male-specific lethal 1 homolog">
    <location>
        <begin position="1"/>
        <end position="614"/>
    </location>
</feature>
<feature type="domain" description="PEHE" evidence="2">
    <location>
        <begin position="472"/>
        <end position="591"/>
    </location>
</feature>
<feature type="region of interest" description="Disordered" evidence="3">
    <location>
        <begin position="1"/>
        <end position="127"/>
    </location>
</feature>
<feature type="region of interest" description="Disordered" evidence="3">
    <location>
        <begin position="147"/>
        <end position="217"/>
    </location>
</feature>
<feature type="region of interest" description="Interaction with MSL2">
    <location>
        <begin position="223"/>
        <end position="237"/>
    </location>
</feature>
<feature type="region of interest" description="Disordered" evidence="3">
    <location>
        <begin position="272"/>
        <end position="420"/>
    </location>
</feature>
<feature type="region of interest" description="Interaction with KAT8 HAT domain" evidence="2">
    <location>
        <begin position="496"/>
        <end position="514"/>
    </location>
</feature>
<feature type="region of interest" description="Sufficient for interaction with MSL3 MRG domain">
    <location>
        <begin position="550"/>
        <end position="591"/>
    </location>
</feature>
<feature type="coiled-coil region" evidence="11">
    <location>
        <begin position="213"/>
        <end position="282"/>
    </location>
</feature>
<feature type="short sequence motif" description="Nuclear localization signal" evidence="1">
    <location>
        <begin position="317"/>
        <end position="346"/>
    </location>
</feature>
<feature type="short sequence motif" description="Bipartite nuclear localization signal" evidence="1">
    <location>
        <begin position="505"/>
        <end position="519"/>
    </location>
</feature>
<feature type="compositionally biased region" description="Low complexity" evidence="3">
    <location>
        <begin position="158"/>
        <end position="169"/>
    </location>
</feature>
<feature type="compositionally biased region" description="Pro residues" evidence="3">
    <location>
        <begin position="170"/>
        <end position="184"/>
    </location>
</feature>
<feature type="compositionally biased region" description="Low complexity" evidence="3">
    <location>
        <begin position="185"/>
        <end position="194"/>
    </location>
</feature>
<feature type="compositionally biased region" description="Basic and acidic residues" evidence="3">
    <location>
        <begin position="272"/>
        <end position="281"/>
    </location>
</feature>
<feature type="compositionally biased region" description="Basic and acidic residues" evidence="3">
    <location>
        <begin position="294"/>
        <end position="304"/>
    </location>
</feature>
<feature type="compositionally biased region" description="Basic and acidic residues" evidence="3">
    <location>
        <begin position="376"/>
        <end position="392"/>
    </location>
</feature>
<feature type="compositionally biased region" description="Polar residues" evidence="3">
    <location>
        <begin position="393"/>
        <end position="407"/>
    </location>
</feature>
<feature type="modified residue" description="Phosphoserine" evidence="24">
    <location>
        <position position="66"/>
    </location>
</feature>
<feature type="modified residue" description="Phosphoserine" evidence="25">
    <location>
        <position position="126"/>
    </location>
</feature>
<feature type="modified residue" description="Phosphoserine" evidence="20 22 23 24 25">
    <location>
        <position position="205"/>
    </location>
</feature>
<feature type="modified residue" description="N6-acetyllysine" evidence="21">
    <location>
        <position position="353"/>
    </location>
</feature>
<feature type="modified residue" description="Phosphoserine" evidence="24">
    <location>
        <position position="393"/>
    </location>
</feature>
<feature type="modified residue" description="Phosphothreonine" evidence="24">
    <location>
        <position position="396"/>
    </location>
</feature>
<feature type="modified residue" description="Phosphoserine" evidence="25">
    <location>
        <position position="442"/>
    </location>
</feature>
<feature type="cross-link" description="Glycyl lysine isopeptide (Lys-Gly) (interchain with G-Cter in SUMO2)" evidence="26">
    <location>
        <position position="301"/>
    </location>
</feature>
<feature type="cross-link" description="Glycyl lysine isopeptide (Lys-Gly) (interchain with G-Cter in SUMO2)" evidence="26">
    <location>
        <position position="365"/>
    </location>
</feature>
<feature type="cross-link" description="Glycyl lysine isopeptide (Lys-Gly) (interchain with G-Cter in SUMO2)" evidence="26">
    <location>
        <position position="378"/>
    </location>
</feature>
<feature type="splice variant" id="VSP_035236" description="In isoform 3." evidence="15">
    <location>
        <begin position="1"/>
        <end position="263"/>
    </location>
</feature>
<feature type="splice variant" id="VSP_035237" description="In isoform 2." evidence="17">
    <location>
        <begin position="1"/>
        <end position="201"/>
    </location>
</feature>
<feature type="sequence conflict" description="In Ref. 1; CAH18213." evidence="18" ref="1">
    <original>S</original>
    <variation>P</variation>
    <location>
        <position position="427"/>
    </location>
</feature>
<feature type="helix" evidence="27">
    <location>
        <begin position="215"/>
        <end position="250"/>
    </location>
</feature>
<feature type="strand" evidence="28">
    <location>
        <begin position="478"/>
        <end position="480"/>
    </location>
</feature>
<feature type="helix" evidence="28">
    <location>
        <begin position="500"/>
        <end position="518"/>
    </location>
</feature>
<keyword id="KW-0002">3D-structure</keyword>
<keyword id="KW-0007">Acetylation</keyword>
<keyword id="KW-0025">Alternative splicing</keyword>
<keyword id="KW-0156">Chromatin regulator</keyword>
<keyword id="KW-0175">Coiled coil</keyword>
<keyword id="KW-1017">Isopeptide bond</keyword>
<keyword id="KW-0539">Nucleus</keyword>
<keyword id="KW-0597">Phosphoprotein</keyword>
<keyword id="KW-1267">Proteomics identification</keyword>
<keyword id="KW-1185">Reference proteome</keyword>
<keyword id="KW-0832">Ubl conjugation</keyword>
<name>MSL1_HUMAN</name>
<reference key="1">
    <citation type="journal article" date="2007" name="BMC Genomics">
        <title>The full-ORF clone resource of the German cDNA consortium.</title>
        <authorList>
            <person name="Bechtel S."/>
            <person name="Rosenfelder H."/>
            <person name="Duda A."/>
            <person name="Schmidt C.P."/>
            <person name="Ernst U."/>
            <person name="Wellenreuther R."/>
            <person name="Mehrle A."/>
            <person name="Schuster C."/>
            <person name="Bahr A."/>
            <person name="Bloecker H."/>
            <person name="Heubner D."/>
            <person name="Hoerlein A."/>
            <person name="Michel G."/>
            <person name="Wedler H."/>
            <person name="Koehrer K."/>
            <person name="Ottenwaelder B."/>
            <person name="Poustka A."/>
            <person name="Wiemann S."/>
            <person name="Schupp I."/>
        </authorList>
    </citation>
    <scope>NUCLEOTIDE SEQUENCE [LARGE SCALE MRNA] (ISOFORM 2)</scope>
    <source>
        <tissue>Rectum tumor</tissue>
        <tissue>Uterus</tissue>
    </source>
</reference>
<reference key="2">
    <citation type="journal article" date="2006" name="Nature">
        <title>DNA sequence of human chromosome 17 and analysis of rearrangement in the human lineage.</title>
        <authorList>
            <person name="Zody M.C."/>
            <person name="Garber M."/>
            <person name="Adams D.J."/>
            <person name="Sharpe T."/>
            <person name="Harrow J."/>
            <person name="Lupski J.R."/>
            <person name="Nicholson C."/>
            <person name="Searle S.M."/>
            <person name="Wilming L."/>
            <person name="Young S.K."/>
            <person name="Abouelleil A."/>
            <person name="Allen N.R."/>
            <person name="Bi W."/>
            <person name="Bloom T."/>
            <person name="Borowsky M.L."/>
            <person name="Bugalter B.E."/>
            <person name="Butler J."/>
            <person name="Chang J.L."/>
            <person name="Chen C.-K."/>
            <person name="Cook A."/>
            <person name="Corum B."/>
            <person name="Cuomo C.A."/>
            <person name="de Jong P.J."/>
            <person name="DeCaprio D."/>
            <person name="Dewar K."/>
            <person name="FitzGerald M."/>
            <person name="Gilbert J."/>
            <person name="Gibson R."/>
            <person name="Gnerre S."/>
            <person name="Goldstein S."/>
            <person name="Grafham D.V."/>
            <person name="Grocock R."/>
            <person name="Hafez N."/>
            <person name="Hagopian D.S."/>
            <person name="Hart E."/>
            <person name="Norman C.H."/>
            <person name="Humphray S."/>
            <person name="Jaffe D.B."/>
            <person name="Jones M."/>
            <person name="Kamal M."/>
            <person name="Khodiyar V.K."/>
            <person name="LaButti K."/>
            <person name="Laird G."/>
            <person name="Lehoczky J."/>
            <person name="Liu X."/>
            <person name="Lokyitsang T."/>
            <person name="Loveland J."/>
            <person name="Lui A."/>
            <person name="Macdonald P."/>
            <person name="Major J.E."/>
            <person name="Matthews L."/>
            <person name="Mauceli E."/>
            <person name="McCarroll S.A."/>
            <person name="Mihalev A.H."/>
            <person name="Mudge J."/>
            <person name="Nguyen C."/>
            <person name="Nicol R."/>
            <person name="O'Leary S.B."/>
            <person name="Osoegawa K."/>
            <person name="Schwartz D.C."/>
            <person name="Shaw-Smith C."/>
            <person name="Stankiewicz P."/>
            <person name="Steward C."/>
            <person name="Swarbreck D."/>
            <person name="Venkataraman V."/>
            <person name="Whittaker C.A."/>
            <person name="Yang X."/>
            <person name="Zimmer A.R."/>
            <person name="Bradley A."/>
            <person name="Hubbard T."/>
            <person name="Birren B.W."/>
            <person name="Rogers J."/>
            <person name="Lander E.S."/>
            <person name="Nusbaum C."/>
        </authorList>
    </citation>
    <scope>NUCLEOTIDE SEQUENCE [LARGE SCALE GENOMIC DNA]</scope>
    <source>
        <tissue>Rectum tumor</tissue>
    </source>
</reference>
<reference key="3">
    <citation type="journal article" date="2004" name="Genome Res.">
        <title>The status, quality, and expansion of the NIH full-length cDNA project: the Mammalian Gene Collection (MGC).</title>
        <authorList>
            <consortium name="The MGC Project Team"/>
        </authorList>
    </citation>
    <scope>NUCLEOTIDE SEQUENCE [LARGE SCALE MRNA] (ISOFORM 3)</scope>
</reference>
<reference key="4">
    <citation type="journal article" date="2005" name="J. Biol. Chem.">
        <title>Systematic identification and analysis of mammalian small ubiquitin-like modifier substrates.</title>
        <authorList>
            <person name="Gocke C.B."/>
            <person name="Yu H."/>
            <person name="Kang J."/>
        </authorList>
    </citation>
    <scope>SUMOYLATION WITH SUMO1</scope>
    <scope>SUBCELLULAR LOCATION</scope>
</reference>
<reference key="5">
    <citation type="journal article" date="2005" name="Mol. Cell. Biol.">
        <title>A human protein complex homologous to the Drosophila MSL complex is responsible for the majority of histone H4 acetylation at lysine 16.</title>
        <authorList>
            <person name="Smith E.R."/>
            <person name="Cayrou C."/>
            <person name="Huang R."/>
            <person name="Lane W.S."/>
            <person name="Cote J."/>
            <person name="Lucchesi J.C."/>
        </authorList>
    </citation>
    <scope>SUBUNIT</scope>
    <scope>INTERACTION WITH MSL2</scope>
    <scope>FUNCTION</scope>
</reference>
<reference key="6">
    <citation type="journal article" date="2006" name="Mol. Cell. Biol.">
        <authorList>
            <person name="Smith E.R."/>
            <person name="Cayrou C."/>
            <person name="Huang R."/>
            <person name="Lane W.S."/>
            <person name="Cote J."/>
            <person name="Lucchesi J.C."/>
        </authorList>
    </citation>
    <scope>ERRATUM OF PUBMED:16227571</scope>
</reference>
<reference key="7">
    <citation type="journal article" date="2006" name="Mol. Cell">
        <title>Nuclear pore components are involved in the transcriptional regulation of dosage compensation in Drosophila.</title>
        <authorList>
            <person name="Mendjan S."/>
            <person name="Taipale M."/>
            <person name="Kind J."/>
            <person name="Holz H."/>
            <person name="Gebhardt P."/>
            <person name="Schelder M."/>
            <person name="Vermeulen M."/>
            <person name="Buscaino A."/>
            <person name="Duncan K."/>
            <person name="Mueller J."/>
            <person name="Wilm M."/>
            <person name="Stunnenberg H.G."/>
            <person name="Saumweber H."/>
            <person name="Akhtar A."/>
        </authorList>
    </citation>
    <scope>FUNCTION</scope>
    <scope>IDENTIFICATION IN THE MSL COMPLEX</scope>
</reference>
<reference key="8">
    <citation type="journal article" date="2008" name="Proc. Natl. Acad. Sci. U.S.A.">
        <title>A quantitative atlas of mitotic phosphorylation.</title>
        <authorList>
            <person name="Dephoure N."/>
            <person name="Zhou C."/>
            <person name="Villen J."/>
            <person name="Beausoleil S.A."/>
            <person name="Bakalarski C.E."/>
            <person name="Elledge S.J."/>
            <person name="Gygi S.P."/>
        </authorList>
    </citation>
    <scope>PHOSPHORYLATION [LARGE SCALE ANALYSIS] AT SER-205</scope>
    <scope>IDENTIFICATION BY MASS SPECTROMETRY [LARGE SCALE ANALYSIS]</scope>
    <source>
        <tissue>Cervix carcinoma</tissue>
    </source>
</reference>
<reference key="9">
    <citation type="journal article" date="2009" name="J. Cell. Physiol.">
        <title>p8/nupr1 regulates DNA-repair activity after double-strand gamma irradiation-induced DNA damage.</title>
        <authorList>
            <person name="Gironella M."/>
            <person name="Malicet C."/>
            <person name="Cano C."/>
            <person name="Sandi M.J."/>
            <person name="Hamidi T."/>
            <person name="Tauil R.M."/>
            <person name="Baston M."/>
            <person name="Valaco P."/>
            <person name="Moreno S."/>
            <person name="Lopez F."/>
            <person name="Neira J.L."/>
            <person name="Dagorn J.C."/>
            <person name="Iovanna J.L."/>
        </authorList>
    </citation>
    <scope>INTERACTION WITH NUPR1 AND TP53BP1</scope>
    <scope>INDUCTION BY GAMMA-IRRADIATION</scope>
</reference>
<reference key="10">
    <citation type="journal article" date="2009" name="Science">
        <title>Lysine acetylation targets protein complexes and co-regulates major cellular functions.</title>
        <authorList>
            <person name="Choudhary C."/>
            <person name="Kumar C."/>
            <person name="Gnad F."/>
            <person name="Nielsen M.L."/>
            <person name="Rehman M."/>
            <person name="Walther T.C."/>
            <person name="Olsen J.V."/>
            <person name="Mann M."/>
        </authorList>
    </citation>
    <scope>ACETYLATION [LARGE SCALE ANALYSIS] AT LYS-353</scope>
    <scope>IDENTIFICATION BY MASS SPECTROMETRY [LARGE SCALE ANALYSIS]</scope>
</reference>
<reference key="11">
    <citation type="journal article" date="2010" name="Sci. Signal.">
        <title>Quantitative phosphoproteomics reveals widespread full phosphorylation site occupancy during mitosis.</title>
        <authorList>
            <person name="Olsen J.V."/>
            <person name="Vermeulen M."/>
            <person name="Santamaria A."/>
            <person name="Kumar C."/>
            <person name="Miller M.L."/>
            <person name="Jensen L.J."/>
            <person name="Gnad F."/>
            <person name="Cox J."/>
            <person name="Jensen T.S."/>
            <person name="Nigg E.A."/>
            <person name="Brunak S."/>
            <person name="Mann M."/>
        </authorList>
    </citation>
    <scope>PHOSPHORYLATION [LARGE SCALE ANALYSIS] AT SER-205</scope>
    <scope>IDENTIFICATION BY MASS SPECTROMETRY [LARGE SCALE ANALYSIS]</scope>
    <source>
        <tissue>Cervix carcinoma</tissue>
    </source>
</reference>
<reference key="12">
    <citation type="journal article" date="2011" name="Mol. Cell">
        <title>The RING finger protein MSL2 in the MOF complex is an E3 ubiquitin ligase for H2B K34 and is involved in crosstalk with H3 K4 and K79 methylation.</title>
        <authorList>
            <person name="Wu L."/>
            <person name="Zee B.M."/>
            <person name="Wang Y."/>
            <person name="Garcia B.A."/>
            <person name="Dou Y."/>
        </authorList>
    </citation>
    <scope>FUNCTION IN H2B UBIQUITINATION</scope>
</reference>
<reference key="13">
    <citation type="journal article" date="2011" name="Nat. Struct. Mol. Biol.">
        <title>Structural basis for MOF and MSL3 recruitment into the dosage compensation complex by MSL1.</title>
        <authorList>
            <person name="Kadlec J."/>
            <person name="Hallacli E."/>
            <person name="Lipp M."/>
            <person name="Holz H."/>
            <person name="Sanchez-Weatherby J."/>
            <person name="Cusack S."/>
            <person name="Akhtar A."/>
        </authorList>
    </citation>
    <scope>INTERACTION WITH KAT8 AND MSL3</scope>
</reference>
<reference key="14">
    <citation type="journal article" date="2011" name="Sci. Signal.">
        <title>System-wide temporal characterization of the proteome and phosphoproteome of human embryonic stem cell differentiation.</title>
        <authorList>
            <person name="Rigbolt K.T."/>
            <person name="Prokhorova T.A."/>
            <person name="Akimov V."/>
            <person name="Henningsen J."/>
            <person name="Johansen P.T."/>
            <person name="Kratchmarova I."/>
            <person name="Kassem M."/>
            <person name="Mann M."/>
            <person name="Olsen J.V."/>
            <person name="Blagoev B."/>
        </authorList>
    </citation>
    <scope>PHOSPHORYLATION [LARGE SCALE ANALYSIS] AT SER-205</scope>
    <scope>IDENTIFICATION BY MASS SPECTROMETRY [LARGE SCALE ANALYSIS]</scope>
</reference>
<reference key="15">
    <citation type="journal article" date="2013" name="J. Proteome Res.">
        <title>Toward a comprehensive characterization of a human cancer cell phosphoproteome.</title>
        <authorList>
            <person name="Zhou H."/>
            <person name="Di Palma S."/>
            <person name="Preisinger C."/>
            <person name="Peng M."/>
            <person name="Polat A.N."/>
            <person name="Heck A.J."/>
            <person name="Mohammed S."/>
        </authorList>
    </citation>
    <scope>PHOSPHORYLATION [LARGE SCALE ANALYSIS] AT SER-66; SER-205; SER-393 AND THR-396</scope>
    <scope>IDENTIFICATION BY MASS SPECTROMETRY [LARGE SCALE ANALYSIS]</scope>
    <source>
        <tissue>Cervix carcinoma</tissue>
        <tissue>Erythroleukemia</tissue>
    </source>
</reference>
<reference key="16">
    <citation type="journal article" date="2014" name="J. Proteomics">
        <title>An enzyme assisted RP-RPLC approach for in-depth analysis of human liver phosphoproteome.</title>
        <authorList>
            <person name="Bian Y."/>
            <person name="Song C."/>
            <person name="Cheng K."/>
            <person name="Dong M."/>
            <person name="Wang F."/>
            <person name="Huang J."/>
            <person name="Sun D."/>
            <person name="Wang L."/>
            <person name="Ye M."/>
            <person name="Zou H."/>
        </authorList>
    </citation>
    <scope>PHOSPHORYLATION [LARGE SCALE ANALYSIS] AT SER-126; SER-205 AND SER-442</scope>
    <scope>IDENTIFICATION BY MASS SPECTROMETRY [LARGE SCALE ANALYSIS]</scope>
    <source>
        <tissue>Liver</tissue>
    </source>
</reference>
<reference key="17">
    <citation type="journal article" date="2017" name="Nat. Struct. Mol. Biol.">
        <title>Site-specific mapping of the human SUMO proteome reveals co-modification with phosphorylation.</title>
        <authorList>
            <person name="Hendriks I.A."/>
            <person name="Lyon D."/>
            <person name="Young C."/>
            <person name="Jensen L.J."/>
            <person name="Vertegaal A.C."/>
            <person name="Nielsen M.L."/>
        </authorList>
    </citation>
    <scope>SUMOYLATION [LARGE SCALE ANALYSIS] AT LYS-301; LYS-365 AND LYS-378</scope>
    <scope>IDENTIFICATION BY MASS SPECTROMETRY [LARGE SCALE ANALYSIS]</scope>
</reference>
<reference key="18">
    <citation type="journal article" date="2018" name="Nat. Genet.">
        <title>De novo mutations in MSL3 cause an X-linked syndrome marked by impaired histone H4 lysine 16 acetylation.</title>
        <authorList>
            <consortium name="DDD Study"/>
            <person name="Basilicata M.F."/>
            <person name="Bruel A.L."/>
            <person name="Semplicio G."/>
            <person name="Valsecchi C.I.K."/>
            <person name="Aktas T."/>
            <person name="Duffourd Y."/>
            <person name="Rumpf T."/>
            <person name="Morton J."/>
            <person name="Bache I."/>
            <person name="Szymanski W.G."/>
            <person name="Gilissen C."/>
            <person name="Vanakker O."/>
            <person name="Ounap K."/>
            <person name="Mittler G."/>
            <person name="van der Burgt I."/>
            <person name="El Chehadeh S."/>
            <person name="Cho M.T."/>
            <person name="Pfundt R."/>
            <person name="Tan T.Y."/>
            <person name="Kirchhoff M."/>
            <person name="Menten B."/>
            <person name="Vergult S."/>
            <person name="Lindstrom K."/>
            <person name="Reis A."/>
            <person name="Johnson D.S."/>
            <person name="Fryer A."/>
            <person name="McKay V."/>
            <person name="Fisher R.B."/>
            <person name="Thauvin-Robinet C."/>
            <person name="Francis D."/>
            <person name="Roscioli T."/>
            <person name="Pajusalu S."/>
            <person name="Radtke K."/>
            <person name="Ganesh J."/>
            <person name="Brunner H.G."/>
            <person name="Wilson M."/>
            <person name="Faivre L."/>
            <person name="Kalscheuer V.M."/>
            <person name="Thevenon J."/>
            <person name="Akhtar A."/>
        </authorList>
    </citation>
    <scope>INTERACTION WITH MSL3</scope>
</reference>
<reference key="19">
    <citation type="journal article" date="2019" name="Arch. Biochem. Biophys.">
        <title>Analysis of histone ubiquitylation by MSL1/MSL2 proteins in vitro.</title>
        <authorList>
            <person name="Krajewski W.A."/>
            <person name="Vassiliev O.L."/>
        </authorList>
    </citation>
    <scope>FUNCTION IN H2B UBIQUITINATION</scope>
</reference>
<reference key="20">
    <citation type="journal article" date="2021" name="Nat. Cell Biol.">
        <title>Disruption of the MSL complex inhibits tumour maintenance by exacerbating chromosomal instability.</title>
        <authorList>
            <person name="Monserrat J."/>
            <person name="Morales Torres C."/>
            <person name="Richardson L."/>
            <person name="Wilson T.S."/>
            <person name="Patel H."/>
            <person name="Domart M.C."/>
            <person name="Horswell S."/>
            <person name="Song O.R."/>
            <person name="Jiang M."/>
            <person name="Crawford M."/>
            <person name="Bui M."/>
            <person name="Dalal Y."/>
            <person name="Scaffidi P."/>
        </authorList>
    </citation>
    <scope>FUNCTION</scope>
    <scope>IDENTIFICATION IN THE MSL COMPLEX</scope>
</reference>
<reference key="21">
    <citation type="journal article" date="2012" name="Cell Res.">
        <title>Structural insight into the regulation of MOF in the male-specific lethal complex and the non-specific lethal complex.</title>
        <authorList>
            <person name="Huang J."/>
            <person name="Wan B."/>
            <person name="Wu L."/>
            <person name="Yang Y."/>
            <person name="Dou Y."/>
            <person name="Lei M."/>
        </authorList>
    </citation>
    <scope>X-RAY CRYSTALLOGRAPHY (2.05 ANGSTROMS) OF 473-520 IN COMPLEX WITH KAT8</scope>
    <scope>FUNCTION IN MSL COMPLEX</scope>
    <scope>INTERACTION WITH KAT8 AND MSL3</scope>
</reference>
<reference key="22">
    <citation type="journal article" date="2012" name="Mol. Cell">
        <title>Msl1-mediated dimerization of the dosage compensation complex is essential for male X-chromosome regulation in Drosophila.</title>
        <authorList>
            <person name="Hallacli E."/>
            <person name="Lipp M."/>
            <person name="Georgiev P."/>
            <person name="Spielman C."/>
            <person name="Cusack S."/>
            <person name="Akhtar A."/>
            <person name="Kadlec J."/>
        </authorList>
    </citation>
    <scope>X-RAY CRYSTALLOGRAPHY (3.25 ANGSTROMS) OF 212-267 IN COMPLEX WITH MSL2</scope>
    <scope>COILED COIL</scope>
    <scope>IDENTIFICATION BY MASS SPECTROMETRY</scope>
    <scope>SUBUNIT</scope>
    <scope>INTERACTION WITH MSL2</scope>
</reference>
<gene>
    <name evidence="16 19" type="primary">MSL1</name>
    <name type="synonym">MSL1L1</name>
</gene>
<dbReference type="EMBL" id="AL049450">
    <property type="protein sequence ID" value="CAH10734.1"/>
    <property type="molecule type" value="mRNA"/>
</dbReference>
<dbReference type="EMBL" id="CR749360">
    <property type="protein sequence ID" value="CAH18213.1"/>
    <property type="molecule type" value="mRNA"/>
</dbReference>
<dbReference type="EMBL" id="AC068669">
    <property type="status" value="NOT_ANNOTATED_CDS"/>
    <property type="molecule type" value="Genomic_DNA"/>
</dbReference>
<dbReference type="EMBL" id="BC118997">
    <property type="protein sequence ID" value="AAI18998.1"/>
    <property type="molecule type" value="mRNA"/>
</dbReference>
<dbReference type="EMBL" id="BC122543">
    <property type="protein sequence ID" value="AAI22544.1"/>
    <property type="molecule type" value="mRNA"/>
</dbReference>
<dbReference type="CCDS" id="CCDS45670.1">
    <molecule id="Q68DK7-3"/>
</dbReference>
<dbReference type="CCDS" id="CCDS92297.1">
    <molecule id="Q68DK7-1"/>
</dbReference>
<dbReference type="RefSeq" id="NP_001012241.1">
    <molecule id="Q68DK7-3"/>
    <property type="nucleotide sequence ID" value="NM_001012241.2"/>
</dbReference>
<dbReference type="RefSeq" id="NP_001352848.1">
    <molecule id="Q68DK7-1"/>
    <property type="nucleotide sequence ID" value="NM_001365919.1"/>
</dbReference>
<dbReference type="RefSeq" id="XP_005257355.1">
    <property type="nucleotide sequence ID" value="XM_005257298.4"/>
</dbReference>
<dbReference type="PDB" id="4B7Y">
    <property type="method" value="X-ray"/>
    <property type="resolution" value="3.25 A"/>
    <property type="chains" value="A/B=212-252"/>
</dbReference>
<dbReference type="PDB" id="4B86">
    <property type="method" value="X-ray"/>
    <property type="resolution" value="3.50 A"/>
    <property type="chains" value="A/B/E/F/I/J=212-267"/>
</dbReference>
<dbReference type="PDB" id="4DNC">
    <property type="method" value="X-ray"/>
    <property type="resolution" value="2.05 A"/>
    <property type="chains" value="D/E=473-520"/>
</dbReference>
<dbReference type="PDBsum" id="4B7Y"/>
<dbReference type="PDBsum" id="4B86"/>
<dbReference type="PDBsum" id="4DNC"/>
<dbReference type="SMR" id="Q68DK7"/>
<dbReference type="BioGRID" id="130859">
    <property type="interactions" value="74"/>
</dbReference>
<dbReference type="ComplexPortal" id="CPX-815">
    <property type="entry name" value="MSL histone acetyltransferase complex"/>
</dbReference>
<dbReference type="CORUM" id="Q68DK7"/>
<dbReference type="DIP" id="DIP-56862N"/>
<dbReference type="FunCoup" id="Q68DK7">
    <property type="interactions" value="3921"/>
</dbReference>
<dbReference type="IntAct" id="Q68DK7">
    <property type="interactions" value="36"/>
</dbReference>
<dbReference type="MINT" id="Q68DK7"/>
<dbReference type="STRING" id="9606.ENSP00000462945"/>
<dbReference type="GlyGen" id="Q68DK7">
    <property type="glycosylation" value="2 sites, 1 O-linked glycan (2 sites)"/>
</dbReference>
<dbReference type="iPTMnet" id="Q68DK7"/>
<dbReference type="PhosphoSitePlus" id="Q68DK7"/>
<dbReference type="BioMuta" id="MSL1"/>
<dbReference type="DMDM" id="322510113"/>
<dbReference type="jPOST" id="Q68DK7"/>
<dbReference type="MassIVE" id="Q68DK7"/>
<dbReference type="PaxDb" id="9606-ENSP00000462945"/>
<dbReference type="PeptideAtlas" id="Q68DK7"/>
<dbReference type="ProteomicsDB" id="66086">
    <molecule id="Q68DK7-1"/>
</dbReference>
<dbReference type="ProteomicsDB" id="66087">
    <molecule id="Q68DK7-2"/>
</dbReference>
<dbReference type="ProteomicsDB" id="66088">
    <molecule id="Q68DK7-3"/>
</dbReference>
<dbReference type="Pumba" id="Q68DK7"/>
<dbReference type="TopDownProteomics" id="Q68DK7-2">
    <molecule id="Q68DK7-2"/>
</dbReference>
<dbReference type="Antibodypedia" id="7890">
    <property type="antibodies" value="88 antibodies from 21 providers"/>
</dbReference>
<dbReference type="DNASU" id="339287"/>
<dbReference type="Ensembl" id="ENST00000398532.9">
    <molecule id="Q68DK7-1"/>
    <property type="protein sequence ID" value="ENSP00000381543.3"/>
    <property type="gene ID" value="ENSG00000188895.12"/>
</dbReference>
<dbReference type="Ensembl" id="ENST00000579565.5">
    <molecule id="Q68DK7-3"/>
    <property type="protein sequence ID" value="ENSP00000462945.1"/>
    <property type="gene ID" value="ENSG00000188895.12"/>
</dbReference>
<dbReference type="GeneID" id="339287"/>
<dbReference type="KEGG" id="hsa:339287"/>
<dbReference type="MANE-Select" id="ENST00000398532.9">
    <property type="protein sequence ID" value="ENSP00000381543.3"/>
    <property type="RefSeq nucleotide sequence ID" value="NM_001365919.1"/>
    <property type="RefSeq protein sequence ID" value="NP_001352848.1"/>
</dbReference>
<dbReference type="UCSC" id="uc002hua.6">
    <molecule id="Q68DK7-1"/>
    <property type="organism name" value="human"/>
</dbReference>
<dbReference type="AGR" id="HGNC:27905"/>
<dbReference type="CTD" id="339287"/>
<dbReference type="DisGeNET" id="339287"/>
<dbReference type="GeneCards" id="MSL1"/>
<dbReference type="HGNC" id="HGNC:27905">
    <property type="gene designation" value="MSL1"/>
</dbReference>
<dbReference type="HPA" id="ENSG00000188895">
    <property type="expression patterns" value="Low tissue specificity"/>
</dbReference>
<dbReference type="MIM" id="614801">
    <property type="type" value="gene"/>
</dbReference>
<dbReference type="neXtProt" id="NX_Q68DK7"/>
<dbReference type="OpenTargets" id="ENSG00000188895"/>
<dbReference type="PharmGKB" id="PA164723127"/>
<dbReference type="VEuPathDB" id="HostDB:ENSG00000188895"/>
<dbReference type="eggNOG" id="ENOG502QQ0S">
    <property type="taxonomic scope" value="Eukaryota"/>
</dbReference>
<dbReference type="GeneTree" id="ENSGT00390000018292"/>
<dbReference type="HOGENOM" id="CLU_030878_1_0_1"/>
<dbReference type="InParanoid" id="Q68DK7"/>
<dbReference type="OMA" id="HAQANCL"/>
<dbReference type="OrthoDB" id="6022555at2759"/>
<dbReference type="PAN-GO" id="Q68DK7">
    <property type="GO annotations" value="3 GO annotations based on evolutionary models"/>
</dbReference>
<dbReference type="PhylomeDB" id="Q68DK7"/>
<dbReference type="TreeFam" id="TF330735"/>
<dbReference type="PathwayCommons" id="Q68DK7"/>
<dbReference type="Reactome" id="R-HSA-3214847">
    <property type="pathway name" value="HATs acetylate histones"/>
</dbReference>
<dbReference type="SignaLink" id="Q68DK7"/>
<dbReference type="SIGNOR" id="Q68DK7"/>
<dbReference type="BioGRID-ORCS" id="339287">
    <property type="hits" value="154 hits in 1168 CRISPR screens"/>
</dbReference>
<dbReference type="ChiTaRS" id="MSL1">
    <property type="organism name" value="human"/>
</dbReference>
<dbReference type="EvolutionaryTrace" id="Q68DK7"/>
<dbReference type="GenomeRNAi" id="339287"/>
<dbReference type="Pharos" id="Q68DK7">
    <property type="development level" value="Tbio"/>
</dbReference>
<dbReference type="PRO" id="PR:Q68DK7"/>
<dbReference type="Proteomes" id="UP000005640">
    <property type="component" value="Chromosome 17"/>
</dbReference>
<dbReference type="RNAct" id="Q68DK7">
    <property type="molecule type" value="protein"/>
</dbReference>
<dbReference type="Bgee" id="ENSG00000188895">
    <property type="expression patterns" value="Expressed in ventricular zone and 208 other cell types or tissues"/>
</dbReference>
<dbReference type="ExpressionAtlas" id="Q68DK7">
    <property type="expression patterns" value="baseline and differential"/>
</dbReference>
<dbReference type="GO" id="GO:0072487">
    <property type="term" value="C:MSL complex"/>
    <property type="evidence" value="ECO:0000314"/>
    <property type="project" value="UniProtKB"/>
</dbReference>
<dbReference type="GO" id="GO:0016607">
    <property type="term" value="C:nuclear speck"/>
    <property type="evidence" value="ECO:0000250"/>
    <property type="project" value="UniProtKB"/>
</dbReference>
<dbReference type="GO" id="GO:0005654">
    <property type="term" value="C:nucleoplasm"/>
    <property type="evidence" value="ECO:0000314"/>
    <property type="project" value="HPA"/>
</dbReference>
<dbReference type="GO" id="GO:0005634">
    <property type="term" value="C:nucleus"/>
    <property type="evidence" value="ECO:0000314"/>
    <property type="project" value="UniProtKB"/>
</dbReference>
<dbReference type="GO" id="GO:0030674">
    <property type="term" value="F:protein-macromolecule adaptor activity"/>
    <property type="evidence" value="ECO:0000314"/>
    <property type="project" value="UniProt"/>
</dbReference>
<dbReference type="GO" id="GO:0006338">
    <property type="term" value="P:chromatin remodeling"/>
    <property type="evidence" value="ECO:0007669"/>
    <property type="project" value="Ensembl"/>
</dbReference>
<dbReference type="GO" id="GO:0045893">
    <property type="term" value="P:positive regulation of DNA-templated transcription"/>
    <property type="evidence" value="ECO:0000314"/>
    <property type="project" value="UniProt"/>
</dbReference>
<dbReference type="DisProt" id="DP01278"/>
<dbReference type="FunFam" id="1.20.5.170:FF:000047">
    <property type="entry name" value="male-specific lethal 1 homolog isoform X1"/>
    <property type="match status" value="1"/>
</dbReference>
<dbReference type="Gene3D" id="1.20.5.170">
    <property type="match status" value="1"/>
</dbReference>
<dbReference type="Gene3D" id="6.10.250.2000">
    <property type="match status" value="1"/>
</dbReference>
<dbReference type="InterPro" id="IPR026711">
    <property type="entry name" value="Msl-1"/>
</dbReference>
<dbReference type="InterPro" id="IPR031840">
    <property type="entry name" value="MSL1_dimer"/>
</dbReference>
<dbReference type="InterPro" id="IPR029332">
    <property type="entry name" value="PEHE_dom"/>
</dbReference>
<dbReference type="PANTHER" id="PTHR21656:SF2">
    <property type="entry name" value="MALE-SPECIFIC LETHAL 1 HOMOLOG"/>
    <property type="match status" value="1"/>
</dbReference>
<dbReference type="PANTHER" id="PTHR21656">
    <property type="entry name" value="MALE-SPECIFIC LETHAL-1 PROTEIN"/>
    <property type="match status" value="1"/>
</dbReference>
<dbReference type="Pfam" id="PF16801">
    <property type="entry name" value="MSL1_dimer"/>
    <property type="match status" value="1"/>
</dbReference>
<dbReference type="Pfam" id="PF15275">
    <property type="entry name" value="PEHE"/>
    <property type="match status" value="1"/>
</dbReference>
<dbReference type="SMART" id="SM01300">
    <property type="entry name" value="PEHE"/>
    <property type="match status" value="1"/>
</dbReference>
<dbReference type="PROSITE" id="PS52052">
    <property type="entry name" value="PEHE"/>
    <property type="match status" value="1"/>
</dbReference>
<evidence type="ECO:0000250" key="1">
    <source>
        <dbReference type="UniProtKB" id="Q6PDM1"/>
    </source>
</evidence>
<evidence type="ECO:0000255" key="2">
    <source>
        <dbReference type="PROSITE-ProRule" id="PRU01397"/>
    </source>
</evidence>
<evidence type="ECO:0000256" key="3">
    <source>
        <dbReference type="SAM" id="MobiDB-lite"/>
    </source>
</evidence>
<evidence type="ECO:0000269" key="4">
    <source>
    </source>
</evidence>
<evidence type="ECO:0000269" key="5">
    <source>
    </source>
</evidence>
<evidence type="ECO:0000269" key="6">
    <source>
    </source>
</evidence>
<evidence type="ECO:0000269" key="7">
    <source>
    </source>
</evidence>
<evidence type="ECO:0000269" key="8">
    <source>
    </source>
</evidence>
<evidence type="ECO:0000269" key="9">
    <source>
    </source>
</evidence>
<evidence type="ECO:0000269" key="10">
    <source>
    </source>
</evidence>
<evidence type="ECO:0000269" key="11">
    <source>
    </source>
</evidence>
<evidence type="ECO:0000269" key="12">
    <source>
    </source>
</evidence>
<evidence type="ECO:0000269" key="13">
    <source>
    </source>
</evidence>
<evidence type="ECO:0000269" key="14">
    <source>
    </source>
</evidence>
<evidence type="ECO:0000303" key="15">
    <source>
    </source>
</evidence>
<evidence type="ECO:0000303" key="16">
    <source>
    </source>
</evidence>
<evidence type="ECO:0000303" key="17">
    <source>
    </source>
</evidence>
<evidence type="ECO:0000305" key="18"/>
<evidence type="ECO:0000312" key="19">
    <source>
        <dbReference type="HGNC" id="HGNC:27905"/>
    </source>
</evidence>
<evidence type="ECO:0007744" key="20">
    <source>
    </source>
</evidence>
<evidence type="ECO:0007744" key="21">
    <source>
    </source>
</evidence>
<evidence type="ECO:0007744" key="22">
    <source>
    </source>
</evidence>
<evidence type="ECO:0007744" key="23">
    <source>
    </source>
</evidence>
<evidence type="ECO:0007744" key="24">
    <source>
    </source>
</evidence>
<evidence type="ECO:0007744" key="25">
    <source>
    </source>
</evidence>
<evidence type="ECO:0007744" key="26">
    <source>
    </source>
</evidence>
<evidence type="ECO:0007829" key="27">
    <source>
        <dbReference type="PDB" id="4B7Y"/>
    </source>
</evidence>
<evidence type="ECO:0007829" key="28">
    <source>
        <dbReference type="PDB" id="4DNC"/>
    </source>
</evidence>
<sequence length="614" mass="67128">MTMRSAVFKAAAAPAGGNPEQRLDYERAAALGGPEDEPGAAEAHFLPRHRKLKEPGPPLASSQGGSPAPSPAGCGGKGRGLLLPAGAAPGQQEESWGGSVPLPCPPPATKQAGIGGEPAAAGAGCSPRPKYQAVLPIQTGSLVAAAKEPTPWAGDKGGAASPAATASDPAGPPPLPLPGPPPLAPTATAGTLAASEGRWKSMRKSPLGGGGGSGASSQAACLKQILLLQLDLIEQQQQQLQAKEKEIEELKSERDTLLARIERMERRMQLVKKDNEKERHKLFQGYETEEREETELSEKIKLECQPELSETSQTLPPKPFSCGRSGKGHKRKSPFGSTERKTPVKKLAPEFSKVKTKTPKHSPIKEEPCGSLSETVCKRELRSQETPEKPRSSVDTPPRLSTPQKGPSTHPKEKAFSSEIEDLPYLSTTEMYLCRWHQPPPSPLPLRESSPKKEETVARCLMPSSVAGETSVLAVPSWRDHSVEPLRDPNPSDLLENLDDSVFSKRHAKLELDEKRRKRWDIQRIREQRILQRLQLRMYKKKGIQESEPEVTSFFPEPDDVESLMITPFLPVVAFGRPLPKLTPQNFELPWLDERSRCRLEIQKKQTPHRTCRK</sequence>
<protein>
    <recommendedName>
        <fullName evidence="16">Male-specific lethal 1 homolog</fullName>
        <shortName evidence="16">MSL-1</shortName>
    </recommendedName>
    <alternativeName>
        <fullName>Male-specific lethal 1-like 1</fullName>
        <shortName>MSL1-like 1</shortName>
    </alternativeName>
    <alternativeName>
        <fullName>Male-specific lethal-1 homolog 1</fullName>
    </alternativeName>
</protein>
<organism>
    <name type="scientific">Homo sapiens</name>
    <name type="common">Human</name>
    <dbReference type="NCBI Taxonomy" id="9606"/>
    <lineage>
        <taxon>Eukaryota</taxon>
        <taxon>Metazoa</taxon>
        <taxon>Chordata</taxon>
        <taxon>Craniata</taxon>
        <taxon>Vertebrata</taxon>
        <taxon>Euteleostomi</taxon>
        <taxon>Mammalia</taxon>
        <taxon>Eutheria</taxon>
        <taxon>Euarchontoglires</taxon>
        <taxon>Primates</taxon>
        <taxon>Haplorrhini</taxon>
        <taxon>Catarrhini</taxon>
        <taxon>Hominidae</taxon>
        <taxon>Homo</taxon>
    </lineage>
</organism>
<comment type="function">
    <text evidence="1 5 6 9 10 13 14">Non-catalytic component of the MSL histone acetyltransferase complex, a multiprotein complex that mediates the majority of histone H4 acetylation at 'Lys-16' (H4K16ac), an epigenetic mark that prevents chromatin compaction (PubMed:16227571, PubMed:16543150, PubMed:33837287). The MSL complex is required for chromosome stability and genome integrity by maintaining homeostatic levels of H4K16ac (PubMed:33837287). The MSL complex is also involved in gene dosage by promoting up-regulation of genes expressed by the X chromosome (By similarity). X up-regulation is required to compensate for autosomal biallelic expression (By similarity). The MSL complex also participates in gene dosage compensation by promoting expression of Tsix non-coding RNA (By similarity). Within the MSL complex, acts as a scaffold to tether MSL3 and KAT8 together for enzymatic activity regulation (PubMed:22547026). Greatly enhances MSL2 E3 ubiquitin ligase activity, promoting monoubiquitination of histone H2B at 'Lys-34' (H2BK34Ub) (PubMed:21726816, PubMed:30930284). This modification in turn stimulates histone H3 methylation at 'Lys-4' (H3K4me) and 'Lys-79' (H3K79me) and leads to gene activation, including that of HOXA9 and MEIS1 (PubMed:21726816).</text>
</comment>
<comment type="subunit">
    <text evidence="2 5 6 7 8 10 12 14">Component of a multisubunit histone acetyltransferase complex (MSL) at least composed of the KAT8/MOF/MYST1, MSL1/hampin, MSL2 and MSL3 (PubMed:16227571, PubMed:16543150, PubMed:21217699, PubMed:22547026, PubMed:30224647, PubMed:33837287). Forms a MSL heterotetrameric core with MSL2 (PubMed:16227571). Interacts (via PEHE domain) with KAT8 (via HAT domain) and MSL3 (via MRG domain); both interactions are direct (PubMed:21217699, PubMed:22547026, PubMed:30224647). Directly interacts with NUPR1 (PubMed:19650074). Interacts with TP53BP1; this interaction may be required for MSL1 DNA repair activity, but not for histone acetyltransferase activity (PubMed:19650074). Interacts with TTC4, ECM2 and PIHD1 (By similarity).</text>
</comment>
<comment type="interaction">
    <interactant intactId="EBI-2560816">
        <id>Q68DK7</id>
    </interactant>
    <interactant intactId="EBI-2560775">
        <id>Q9HCI7</id>
        <label>MSL2</label>
    </interactant>
    <organismsDiffer>false</organismsDiffer>
    <experiments>3</experiments>
</comment>
<comment type="interaction">
    <interactant intactId="EBI-26435399">
        <id>Q68DK7-1</id>
    </interactant>
    <interactant intactId="EBI-26435386">
        <id>Q9H7Z6-1</id>
        <label>KAT8</label>
    </interactant>
    <organismsDiffer>false</organismsDiffer>
    <experiments>2</experiments>
</comment>
<comment type="subcellular location">
    <subcellularLocation>
        <location evidence="4">Nucleus</location>
    </subcellularLocation>
    <subcellularLocation>
        <location evidence="1">Nucleus</location>
        <location evidence="1">Nucleoplasm</location>
    </subcellularLocation>
    <subcellularLocation>
        <location evidence="1">Nucleus speckle</location>
    </subcellularLocation>
</comment>
<comment type="alternative products">
    <event type="alternative splicing"/>
    <isoform>
        <id>Q68DK7-1</id>
        <name>1</name>
        <sequence type="displayed"/>
    </isoform>
    <isoform>
        <id>Q68DK7-2</id>
        <name>2</name>
        <sequence type="described" ref="VSP_035237"/>
    </isoform>
    <isoform>
        <id>Q68DK7-3</id>
        <name>3</name>
        <sequence type="described" ref="VSP_035236"/>
    </isoform>
</comment>
<comment type="induction">
    <text evidence="7">Up-regulated by gamma-irradiation.</text>
</comment>
<comment type="domain">
    <text evidence="11">The coiled coil is formed by helices from two subunits in the MSL1 homodimer.</text>
</comment>
<comment type="PTM">
    <text evidence="4">Sumoylated with SUMO1.</text>
</comment>
<comment type="similarity">
    <text evidence="18">Belongs to the msl-1 family.</text>
</comment>
<proteinExistence type="evidence at protein level"/>
<accession>Q68DK7</accession>
<accession>Q0VF46</accession>
<accession>Q69Z03</accession>